<reference key="1">
    <citation type="submission" date="2007-08" db="EMBL/GenBank/DDBJ databases">
        <authorList>
            <consortium name="The Citrobacter koseri Genome Sequencing Project"/>
            <person name="McClelland M."/>
            <person name="Sanderson E.K."/>
            <person name="Porwollik S."/>
            <person name="Spieth J."/>
            <person name="Clifton W.S."/>
            <person name="Latreille P."/>
            <person name="Courtney L."/>
            <person name="Wang C."/>
            <person name="Pepin K."/>
            <person name="Bhonagiri V."/>
            <person name="Nash W."/>
            <person name="Johnson M."/>
            <person name="Thiruvilangam P."/>
            <person name="Wilson R."/>
        </authorList>
    </citation>
    <scope>NUCLEOTIDE SEQUENCE [LARGE SCALE GENOMIC DNA]</scope>
    <source>
        <strain>ATCC BAA-895 / CDC 4225-83 / SGSC4696</strain>
    </source>
</reference>
<organism>
    <name type="scientific">Citrobacter koseri (strain ATCC BAA-895 / CDC 4225-83 / SGSC4696)</name>
    <dbReference type="NCBI Taxonomy" id="290338"/>
    <lineage>
        <taxon>Bacteria</taxon>
        <taxon>Pseudomonadati</taxon>
        <taxon>Pseudomonadota</taxon>
        <taxon>Gammaproteobacteria</taxon>
        <taxon>Enterobacterales</taxon>
        <taxon>Enterobacteriaceae</taxon>
        <taxon>Citrobacter</taxon>
    </lineage>
</organism>
<dbReference type="EC" id="2.1.1.192" evidence="1"/>
<dbReference type="EMBL" id="CP000822">
    <property type="protein sequence ID" value="ABV11432.1"/>
    <property type="molecule type" value="Genomic_DNA"/>
</dbReference>
<dbReference type="RefSeq" id="WP_012131263.1">
    <property type="nucleotide sequence ID" value="NC_009792.1"/>
</dbReference>
<dbReference type="SMR" id="A8AD69"/>
<dbReference type="STRING" id="290338.CKO_00268"/>
<dbReference type="GeneID" id="45134547"/>
<dbReference type="KEGG" id="cko:CKO_00268"/>
<dbReference type="HOGENOM" id="CLU_029101_0_0_6"/>
<dbReference type="OrthoDB" id="9793973at2"/>
<dbReference type="Proteomes" id="UP000008148">
    <property type="component" value="Chromosome"/>
</dbReference>
<dbReference type="GO" id="GO:0005737">
    <property type="term" value="C:cytoplasm"/>
    <property type="evidence" value="ECO:0007669"/>
    <property type="project" value="UniProtKB-SubCell"/>
</dbReference>
<dbReference type="GO" id="GO:0051539">
    <property type="term" value="F:4 iron, 4 sulfur cluster binding"/>
    <property type="evidence" value="ECO:0007669"/>
    <property type="project" value="UniProtKB-UniRule"/>
</dbReference>
<dbReference type="GO" id="GO:0046872">
    <property type="term" value="F:metal ion binding"/>
    <property type="evidence" value="ECO:0007669"/>
    <property type="project" value="UniProtKB-KW"/>
</dbReference>
<dbReference type="GO" id="GO:0070040">
    <property type="term" value="F:rRNA (adenine(2503)-C2-)-methyltransferase activity"/>
    <property type="evidence" value="ECO:0007669"/>
    <property type="project" value="UniProtKB-UniRule"/>
</dbReference>
<dbReference type="GO" id="GO:0019843">
    <property type="term" value="F:rRNA binding"/>
    <property type="evidence" value="ECO:0007669"/>
    <property type="project" value="UniProtKB-UniRule"/>
</dbReference>
<dbReference type="GO" id="GO:0002935">
    <property type="term" value="F:tRNA (adenine(37)-C2)-methyltransferase activity"/>
    <property type="evidence" value="ECO:0007669"/>
    <property type="project" value="UniProtKB-UniRule"/>
</dbReference>
<dbReference type="GO" id="GO:0000049">
    <property type="term" value="F:tRNA binding"/>
    <property type="evidence" value="ECO:0007669"/>
    <property type="project" value="UniProtKB-UniRule"/>
</dbReference>
<dbReference type="GO" id="GO:0070475">
    <property type="term" value="P:rRNA base methylation"/>
    <property type="evidence" value="ECO:0007669"/>
    <property type="project" value="UniProtKB-UniRule"/>
</dbReference>
<dbReference type="GO" id="GO:0030488">
    <property type="term" value="P:tRNA methylation"/>
    <property type="evidence" value="ECO:0007669"/>
    <property type="project" value="UniProtKB-UniRule"/>
</dbReference>
<dbReference type="CDD" id="cd01335">
    <property type="entry name" value="Radical_SAM"/>
    <property type="match status" value="1"/>
</dbReference>
<dbReference type="FunFam" id="1.10.150.530:FF:000001">
    <property type="entry name" value="Dual-specificity RNA methyltransferase RlmN"/>
    <property type="match status" value="1"/>
</dbReference>
<dbReference type="FunFam" id="3.20.20.70:FF:000008">
    <property type="entry name" value="Dual-specificity RNA methyltransferase RlmN"/>
    <property type="match status" value="1"/>
</dbReference>
<dbReference type="Gene3D" id="1.10.150.530">
    <property type="match status" value="1"/>
</dbReference>
<dbReference type="Gene3D" id="3.20.20.70">
    <property type="entry name" value="Aldolase class I"/>
    <property type="match status" value="1"/>
</dbReference>
<dbReference type="HAMAP" id="MF_01849">
    <property type="entry name" value="RNA_methyltr_RlmN"/>
    <property type="match status" value="1"/>
</dbReference>
<dbReference type="InterPro" id="IPR013785">
    <property type="entry name" value="Aldolase_TIM"/>
</dbReference>
<dbReference type="InterPro" id="IPR040072">
    <property type="entry name" value="Methyltransferase_A"/>
</dbReference>
<dbReference type="InterPro" id="IPR048641">
    <property type="entry name" value="RlmN_N"/>
</dbReference>
<dbReference type="InterPro" id="IPR027492">
    <property type="entry name" value="RNA_MTrfase_RlmN"/>
</dbReference>
<dbReference type="InterPro" id="IPR004383">
    <property type="entry name" value="rRNA_lsu_MTrfase_RlmN/Cfr"/>
</dbReference>
<dbReference type="InterPro" id="IPR007197">
    <property type="entry name" value="rSAM"/>
</dbReference>
<dbReference type="NCBIfam" id="NF008396">
    <property type="entry name" value="PRK11194.1"/>
    <property type="match status" value="1"/>
</dbReference>
<dbReference type="NCBIfam" id="TIGR00048">
    <property type="entry name" value="rRNA_mod_RlmN"/>
    <property type="match status" value="1"/>
</dbReference>
<dbReference type="PANTHER" id="PTHR30544">
    <property type="entry name" value="23S RRNA METHYLTRANSFERASE"/>
    <property type="match status" value="1"/>
</dbReference>
<dbReference type="PANTHER" id="PTHR30544:SF5">
    <property type="entry name" value="RADICAL SAM CORE DOMAIN-CONTAINING PROTEIN"/>
    <property type="match status" value="1"/>
</dbReference>
<dbReference type="Pfam" id="PF04055">
    <property type="entry name" value="Radical_SAM"/>
    <property type="match status" value="1"/>
</dbReference>
<dbReference type="Pfam" id="PF21016">
    <property type="entry name" value="RlmN_N"/>
    <property type="match status" value="1"/>
</dbReference>
<dbReference type="PIRSF" id="PIRSF006004">
    <property type="entry name" value="CHP00048"/>
    <property type="match status" value="1"/>
</dbReference>
<dbReference type="SFLD" id="SFLDF00275">
    <property type="entry name" value="adenosine_C2_methyltransferase"/>
    <property type="match status" value="1"/>
</dbReference>
<dbReference type="SFLD" id="SFLDS00029">
    <property type="entry name" value="Radical_SAM"/>
    <property type="match status" value="1"/>
</dbReference>
<dbReference type="SUPFAM" id="SSF102114">
    <property type="entry name" value="Radical SAM enzymes"/>
    <property type="match status" value="1"/>
</dbReference>
<dbReference type="PROSITE" id="PS51918">
    <property type="entry name" value="RADICAL_SAM"/>
    <property type="match status" value="1"/>
</dbReference>
<gene>
    <name evidence="1" type="primary">rlmN</name>
    <name type="ordered locus">CKO_00268</name>
</gene>
<comment type="function">
    <text evidence="1">Specifically methylates position 2 of adenine 2503 in 23S rRNA and position 2 of adenine 37 in tRNAs. m2A2503 modification seems to play a crucial role in the proofreading step occurring at the peptidyl transferase center and thus would serve to optimize ribosomal fidelity.</text>
</comment>
<comment type="catalytic activity">
    <reaction evidence="1">
        <text>adenosine(2503) in 23S rRNA + 2 reduced [2Fe-2S]-[ferredoxin] + 2 S-adenosyl-L-methionine = 2-methyladenosine(2503) in 23S rRNA + 5'-deoxyadenosine + L-methionine + 2 oxidized [2Fe-2S]-[ferredoxin] + S-adenosyl-L-homocysteine</text>
        <dbReference type="Rhea" id="RHEA:42916"/>
        <dbReference type="Rhea" id="RHEA-COMP:10000"/>
        <dbReference type="Rhea" id="RHEA-COMP:10001"/>
        <dbReference type="Rhea" id="RHEA-COMP:10152"/>
        <dbReference type="Rhea" id="RHEA-COMP:10282"/>
        <dbReference type="ChEBI" id="CHEBI:17319"/>
        <dbReference type="ChEBI" id="CHEBI:33737"/>
        <dbReference type="ChEBI" id="CHEBI:33738"/>
        <dbReference type="ChEBI" id="CHEBI:57844"/>
        <dbReference type="ChEBI" id="CHEBI:57856"/>
        <dbReference type="ChEBI" id="CHEBI:59789"/>
        <dbReference type="ChEBI" id="CHEBI:74411"/>
        <dbReference type="ChEBI" id="CHEBI:74497"/>
        <dbReference type="EC" id="2.1.1.192"/>
    </reaction>
</comment>
<comment type="catalytic activity">
    <reaction evidence="1">
        <text>adenosine(37) in tRNA + 2 reduced [2Fe-2S]-[ferredoxin] + 2 S-adenosyl-L-methionine = 2-methyladenosine(37) in tRNA + 5'-deoxyadenosine + L-methionine + 2 oxidized [2Fe-2S]-[ferredoxin] + S-adenosyl-L-homocysteine</text>
        <dbReference type="Rhea" id="RHEA:43332"/>
        <dbReference type="Rhea" id="RHEA-COMP:10000"/>
        <dbReference type="Rhea" id="RHEA-COMP:10001"/>
        <dbReference type="Rhea" id="RHEA-COMP:10162"/>
        <dbReference type="Rhea" id="RHEA-COMP:10485"/>
        <dbReference type="ChEBI" id="CHEBI:17319"/>
        <dbReference type="ChEBI" id="CHEBI:33737"/>
        <dbReference type="ChEBI" id="CHEBI:33738"/>
        <dbReference type="ChEBI" id="CHEBI:57844"/>
        <dbReference type="ChEBI" id="CHEBI:57856"/>
        <dbReference type="ChEBI" id="CHEBI:59789"/>
        <dbReference type="ChEBI" id="CHEBI:74411"/>
        <dbReference type="ChEBI" id="CHEBI:74497"/>
        <dbReference type="EC" id="2.1.1.192"/>
    </reaction>
</comment>
<comment type="cofactor">
    <cofactor evidence="1">
        <name>[4Fe-4S] cluster</name>
        <dbReference type="ChEBI" id="CHEBI:49883"/>
    </cofactor>
    <text evidence="1">Binds 1 [4Fe-4S] cluster. The cluster is coordinated with 3 cysteines and an exchangeable S-adenosyl-L-methionine.</text>
</comment>
<comment type="subcellular location">
    <subcellularLocation>
        <location evidence="1">Cytoplasm</location>
    </subcellularLocation>
</comment>
<comment type="miscellaneous">
    <text evidence="1">Reaction proceeds by a ping-pong mechanism involving intermediate methylation of a conserved cysteine residue.</text>
</comment>
<comment type="similarity">
    <text evidence="1">Belongs to the radical SAM superfamily. RlmN family.</text>
</comment>
<feature type="chain" id="PRO_0000350109" description="Dual-specificity RNA methyltransferase RlmN">
    <location>
        <begin position="1"/>
        <end position="388"/>
    </location>
</feature>
<feature type="domain" description="Radical SAM core" evidence="2">
    <location>
        <begin position="115"/>
        <end position="354"/>
    </location>
</feature>
<feature type="active site" description="Proton acceptor" evidence="1">
    <location>
        <position position="109"/>
    </location>
</feature>
<feature type="active site" description="S-methylcysteine intermediate" evidence="1">
    <location>
        <position position="359"/>
    </location>
</feature>
<feature type="binding site" evidence="1">
    <location>
        <position position="129"/>
    </location>
    <ligand>
        <name>[4Fe-4S] cluster</name>
        <dbReference type="ChEBI" id="CHEBI:49883"/>
        <note>4Fe-4S-S-AdoMet</note>
    </ligand>
</feature>
<feature type="binding site" evidence="1">
    <location>
        <position position="133"/>
    </location>
    <ligand>
        <name>[4Fe-4S] cluster</name>
        <dbReference type="ChEBI" id="CHEBI:49883"/>
        <note>4Fe-4S-S-AdoMet</note>
    </ligand>
</feature>
<feature type="binding site" evidence="1">
    <location>
        <position position="136"/>
    </location>
    <ligand>
        <name>[4Fe-4S] cluster</name>
        <dbReference type="ChEBI" id="CHEBI:49883"/>
        <note>4Fe-4S-S-AdoMet</note>
    </ligand>
</feature>
<feature type="binding site" evidence="1">
    <location>
        <begin position="183"/>
        <end position="184"/>
    </location>
    <ligand>
        <name>S-adenosyl-L-methionine</name>
        <dbReference type="ChEBI" id="CHEBI:59789"/>
    </ligand>
</feature>
<feature type="binding site" evidence="1">
    <location>
        <position position="215"/>
    </location>
    <ligand>
        <name>S-adenosyl-L-methionine</name>
        <dbReference type="ChEBI" id="CHEBI:59789"/>
    </ligand>
</feature>
<feature type="binding site" evidence="1">
    <location>
        <begin position="237"/>
        <end position="239"/>
    </location>
    <ligand>
        <name>S-adenosyl-L-methionine</name>
        <dbReference type="ChEBI" id="CHEBI:59789"/>
    </ligand>
</feature>
<feature type="binding site" evidence="1">
    <location>
        <position position="316"/>
    </location>
    <ligand>
        <name>S-adenosyl-L-methionine</name>
        <dbReference type="ChEBI" id="CHEBI:59789"/>
    </ligand>
</feature>
<feature type="disulfide bond" description="(transient)" evidence="1">
    <location>
        <begin position="122"/>
        <end position="359"/>
    </location>
</feature>
<accession>A8AD69</accession>
<evidence type="ECO:0000255" key="1">
    <source>
        <dbReference type="HAMAP-Rule" id="MF_01849"/>
    </source>
</evidence>
<evidence type="ECO:0000255" key="2">
    <source>
        <dbReference type="PROSITE-ProRule" id="PRU01266"/>
    </source>
</evidence>
<proteinExistence type="inferred from homology"/>
<sequence length="388" mass="43564">MSEQIVTSEIITPVVPDKNGKINLLDLNRQQMREFFKELGEKPFRADQVMKWMYHYCSDNFDEMTDINKVLRGKLKEVAEIRAPEVVEEQRSSDGTIKWAIAVGDQRVETVYIPEDDRATLCVSSQVGCALECKFCSTAQQGFNRNLRVSEIIGQVWRAAKIVGAAKVTGQRPITNVVMMGMGEPLLNLTNVVPAMEIMLDDFGFGLSKRRVTLSTSGVVPALDKLGDMIDVALAISLHAPNDEIRDEIVPINRKYNIETFLDAVRRYLQKSNANQGRVTIEYVMLDHINDGTEHAHQLAELLKDTPCKINLIPWNPFPGAPYGRSSNSRIDRFSKVLMSYGFTTIVRKTRGDDIDAACGQLAGDVIDRTKRTLRKRMQGEAIDIKAV</sequence>
<name>RLMN_CITK8</name>
<protein>
    <recommendedName>
        <fullName evidence="1">Dual-specificity RNA methyltransferase RlmN</fullName>
        <ecNumber evidence="1">2.1.1.192</ecNumber>
    </recommendedName>
    <alternativeName>
        <fullName evidence="1">23S rRNA (adenine(2503)-C(2))-methyltransferase</fullName>
    </alternativeName>
    <alternativeName>
        <fullName evidence="1">23S rRNA m2A2503 methyltransferase</fullName>
    </alternativeName>
    <alternativeName>
        <fullName evidence="1">Ribosomal RNA large subunit methyltransferase N</fullName>
    </alternativeName>
    <alternativeName>
        <fullName evidence="1">tRNA (adenine(37)-C(2))-methyltransferase</fullName>
    </alternativeName>
    <alternativeName>
        <fullName evidence="1">tRNA m2A37 methyltransferase</fullName>
    </alternativeName>
</protein>
<keyword id="KW-0004">4Fe-4S</keyword>
<keyword id="KW-0963">Cytoplasm</keyword>
<keyword id="KW-1015">Disulfide bond</keyword>
<keyword id="KW-0408">Iron</keyword>
<keyword id="KW-0411">Iron-sulfur</keyword>
<keyword id="KW-0479">Metal-binding</keyword>
<keyword id="KW-0489">Methyltransferase</keyword>
<keyword id="KW-1185">Reference proteome</keyword>
<keyword id="KW-0698">rRNA processing</keyword>
<keyword id="KW-0949">S-adenosyl-L-methionine</keyword>
<keyword id="KW-0808">Transferase</keyword>
<keyword id="KW-0819">tRNA processing</keyword>